<feature type="chain" id="PRO_0000318520" description="Hsp90 co-chaperone Cdc37-like 1">
    <location>
        <begin position="1"/>
        <end position="337"/>
    </location>
</feature>
<feature type="region of interest" description="Disordered" evidence="4">
    <location>
        <begin position="1"/>
        <end position="43"/>
    </location>
</feature>
<feature type="region of interest" description="Self-association" evidence="1">
    <location>
        <begin position="2"/>
        <end position="171"/>
    </location>
</feature>
<feature type="region of interest" description="Self-association and interaction with Hsp90" evidence="1">
    <location>
        <begin position="147"/>
        <end position="277"/>
    </location>
</feature>
<feature type="region of interest" description="Interaction with Hsp70" evidence="1">
    <location>
        <begin position="267"/>
        <end position="337"/>
    </location>
</feature>
<feature type="region of interest" description="Required for interaction with STIP1" evidence="1">
    <location>
        <begin position="278"/>
        <end position="337"/>
    </location>
</feature>
<feature type="coiled-coil region" evidence="3">
    <location>
        <begin position="84"/>
        <end position="122"/>
    </location>
</feature>
<feature type="compositionally biased region" description="Pro residues" evidence="4">
    <location>
        <begin position="1"/>
        <end position="11"/>
    </location>
</feature>
<feature type="modified residue" description="Phosphoserine" evidence="2">
    <location>
        <position position="32"/>
    </location>
</feature>
<feature type="modified residue" description="Phosphoserine" evidence="2">
    <location>
        <position position="88"/>
    </location>
</feature>
<feature type="splice variant" id="VSP_031211" description="In isoform 2." evidence="5">
    <original>NP</original>
    <variation>VS</variation>
    <location>
        <begin position="305"/>
        <end position="306"/>
    </location>
</feature>
<feature type="splice variant" id="VSP_031212" description="In isoform 2." evidence="5">
    <location>
        <begin position="307"/>
        <end position="337"/>
    </location>
</feature>
<name>CD37L_BOVIN</name>
<gene>
    <name type="primary">CDC37L1</name>
</gene>
<proteinExistence type="evidence at transcript level"/>
<keyword id="KW-0025">Alternative splicing</keyword>
<keyword id="KW-0143">Chaperone</keyword>
<keyword id="KW-0175">Coiled coil</keyword>
<keyword id="KW-0963">Cytoplasm</keyword>
<keyword id="KW-0597">Phosphoprotein</keyword>
<keyword id="KW-1185">Reference proteome</keyword>
<reference key="1">
    <citation type="journal article" date="2009" name="Science">
        <title>The genome sequence of taurine cattle: a window to ruminant biology and evolution.</title>
        <authorList>
            <consortium name="The bovine genome sequencing and analysis consortium"/>
        </authorList>
    </citation>
    <scope>NUCLEOTIDE SEQUENCE [LARGE SCALE GENOMIC DNA]</scope>
    <source>
        <strain>Hereford</strain>
    </source>
</reference>
<reference key="2">
    <citation type="submission" date="2007-06" db="EMBL/GenBank/DDBJ databases">
        <authorList>
            <consortium name="NIH - Mammalian Gene Collection (MGC) project"/>
        </authorList>
    </citation>
    <scope>NUCLEOTIDE SEQUENCE [LARGE SCALE MRNA] (ISOFORM 2)</scope>
    <scope>NUCLEOTIDE SEQUENCE [LARGE SCALE MRNA] OF 116-337 (ISOFORM 1)</scope>
    <source>
        <strain>Crossbred X Angus</strain>
        <tissue>Liver</tissue>
    </source>
</reference>
<dbReference type="EMBL" id="AAFC03000142">
    <property type="status" value="NOT_ANNOTATED_CDS"/>
    <property type="molecule type" value="Genomic_DNA"/>
</dbReference>
<dbReference type="EMBL" id="AAFC03117968">
    <property type="status" value="NOT_ANNOTATED_CDS"/>
    <property type="molecule type" value="Genomic_DNA"/>
</dbReference>
<dbReference type="EMBL" id="BC146118">
    <property type="protein sequence ID" value="AAI46119.1"/>
    <property type="molecule type" value="mRNA"/>
</dbReference>
<dbReference type="EMBL" id="DT850745">
    <property type="status" value="NOT_ANNOTATED_CDS"/>
    <property type="molecule type" value="mRNA"/>
</dbReference>
<dbReference type="RefSeq" id="NP_001092401.1">
    <molecule id="A6H754-2"/>
    <property type="nucleotide sequence ID" value="NM_001098931.1"/>
</dbReference>
<dbReference type="RefSeq" id="XP_005210020.1">
    <molecule id="A6H754-1"/>
    <property type="nucleotide sequence ID" value="XM_005209963.5"/>
</dbReference>
<dbReference type="SMR" id="A6H754"/>
<dbReference type="FunCoup" id="A6H754">
    <property type="interactions" value="1013"/>
</dbReference>
<dbReference type="STRING" id="9913.ENSBTAP00000022777"/>
<dbReference type="PaxDb" id="9913-ENSBTAP00000022777"/>
<dbReference type="Ensembl" id="ENSBTAT00000022777.6">
    <molecule id="A6H754-1"/>
    <property type="protein sequence ID" value="ENSBTAP00000022777.4"/>
    <property type="gene ID" value="ENSBTAG00000017137.6"/>
</dbReference>
<dbReference type="GeneID" id="510572"/>
<dbReference type="KEGG" id="bta:510572"/>
<dbReference type="CTD" id="55664"/>
<dbReference type="VEuPathDB" id="HostDB:ENSBTAG00000017137"/>
<dbReference type="eggNOG" id="KOG2260">
    <property type="taxonomic scope" value="Eukaryota"/>
</dbReference>
<dbReference type="GeneTree" id="ENSGT00390000013443"/>
<dbReference type="HOGENOM" id="CLU_046495_1_0_1"/>
<dbReference type="InParanoid" id="A6H754"/>
<dbReference type="OMA" id="YAAKCRN"/>
<dbReference type="OrthoDB" id="440202at2759"/>
<dbReference type="TreeFam" id="TF101059"/>
<dbReference type="Reactome" id="R-BTA-114608">
    <property type="pathway name" value="Platelet degranulation"/>
</dbReference>
<dbReference type="Proteomes" id="UP000009136">
    <property type="component" value="Chromosome 8"/>
</dbReference>
<dbReference type="Bgee" id="ENSBTAG00000017137">
    <property type="expression patterns" value="Expressed in oocyte and 104 other cell types or tissues"/>
</dbReference>
<dbReference type="GO" id="GO:0005737">
    <property type="term" value="C:cytoplasm"/>
    <property type="evidence" value="ECO:0000318"/>
    <property type="project" value="GO_Central"/>
</dbReference>
<dbReference type="GO" id="GO:0005829">
    <property type="term" value="C:cytosol"/>
    <property type="evidence" value="ECO:0007669"/>
    <property type="project" value="Ensembl"/>
</dbReference>
<dbReference type="GO" id="GO:0031072">
    <property type="term" value="F:heat shock protein binding"/>
    <property type="evidence" value="ECO:0000318"/>
    <property type="project" value="GO_Central"/>
</dbReference>
<dbReference type="GO" id="GO:0051087">
    <property type="term" value="F:protein-folding chaperone binding"/>
    <property type="evidence" value="ECO:0000318"/>
    <property type="project" value="GO_Central"/>
</dbReference>
<dbReference type="GO" id="GO:0051082">
    <property type="term" value="F:unfolded protein binding"/>
    <property type="evidence" value="ECO:0000318"/>
    <property type="project" value="GO_Central"/>
</dbReference>
<dbReference type="GO" id="GO:0006457">
    <property type="term" value="P:protein folding"/>
    <property type="evidence" value="ECO:0000318"/>
    <property type="project" value="GO_Central"/>
</dbReference>
<dbReference type="GO" id="GO:0050821">
    <property type="term" value="P:protein stabilization"/>
    <property type="evidence" value="ECO:0000318"/>
    <property type="project" value="GO_Central"/>
</dbReference>
<dbReference type="FunFam" id="1.20.58.610:FF:000001">
    <property type="entry name" value="Hsp90 co-chaperone Cdc37-like 1"/>
    <property type="match status" value="1"/>
</dbReference>
<dbReference type="Gene3D" id="1.20.58.610">
    <property type="entry name" value="Cdc37, Hsp90 binding domain"/>
    <property type="match status" value="1"/>
</dbReference>
<dbReference type="InterPro" id="IPR004918">
    <property type="entry name" value="Cdc37"/>
</dbReference>
<dbReference type="InterPro" id="IPR013874">
    <property type="entry name" value="Cdc37_Hsp90-bd"/>
</dbReference>
<dbReference type="InterPro" id="IPR038189">
    <property type="entry name" value="Cdc37_Hsp90-bd_sf"/>
</dbReference>
<dbReference type="PANTHER" id="PTHR12800">
    <property type="entry name" value="CDC37-RELATED"/>
    <property type="match status" value="1"/>
</dbReference>
<dbReference type="PANTHER" id="PTHR12800:SF2">
    <property type="entry name" value="HSP90 CO-CHAPERONE CDC37-LIKE 1"/>
    <property type="match status" value="1"/>
</dbReference>
<dbReference type="Pfam" id="PF08565">
    <property type="entry name" value="CDC37_M"/>
    <property type="match status" value="1"/>
</dbReference>
<dbReference type="SMART" id="SM01070">
    <property type="entry name" value="CDC37_M"/>
    <property type="match status" value="1"/>
</dbReference>
<dbReference type="SUPFAM" id="SSF101391">
    <property type="entry name" value="Hsp90 co-chaperone CDC37"/>
    <property type="match status" value="1"/>
</dbReference>
<protein>
    <recommendedName>
        <fullName>Hsp90 co-chaperone Cdc37-like 1</fullName>
    </recommendedName>
</protein>
<comment type="function">
    <text evidence="1">Co-chaperone that binds to numerous proteins and promotes their interaction with Hsp70 and Hsp90.</text>
</comment>
<comment type="subunit">
    <text evidence="1">Self-associates. Forms complexes with Hsp70 and Hsp90. Interacts with CDC37, FKBP4, PPID and STIP1.</text>
</comment>
<comment type="subcellular location">
    <subcellularLocation>
        <location evidence="1">Cytoplasm</location>
    </subcellularLocation>
</comment>
<comment type="alternative products">
    <event type="alternative splicing"/>
    <isoform>
        <id>A6H754-1</id>
        <name>1</name>
        <sequence type="displayed"/>
    </isoform>
    <isoform>
        <id>A6H754-2</id>
        <name>2</name>
        <sequence type="described" ref="VSP_031211 VSP_031212"/>
    </isoform>
</comment>
<comment type="similarity">
    <text evidence="6">Belongs to the CDC37 family.</text>
</comment>
<organism>
    <name type="scientific">Bos taurus</name>
    <name type="common">Bovine</name>
    <dbReference type="NCBI Taxonomy" id="9913"/>
    <lineage>
        <taxon>Eukaryota</taxon>
        <taxon>Metazoa</taxon>
        <taxon>Chordata</taxon>
        <taxon>Craniata</taxon>
        <taxon>Vertebrata</taxon>
        <taxon>Euteleostomi</taxon>
        <taxon>Mammalia</taxon>
        <taxon>Eutheria</taxon>
        <taxon>Laurasiatheria</taxon>
        <taxon>Artiodactyla</taxon>
        <taxon>Ruminantia</taxon>
        <taxon>Pecora</taxon>
        <taxon>Bovidae</taxon>
        <taxon>Bovinae</taxon>
        <taxon>Bos</taxon>
    </lineage>
</organism>
<sequence length="337" mass="38850">MEQPWPPPGPWSLPRAEGEAEEESDLDLSPGSPRCPQLPGGGTQMYSHGIEMACQKQKEFVKSSVACKWNLAEAQQKLGSLALHNSESLDQEHAKAQTAISELRQREEEWRQKEEALVQRERMCLWNMDAISKDVFNKSFINQDKRKETEDEDKSKSFMQKHEQKIRHFGMLSRWDDSQRFLSDHPYLVCEETAKYLILWCFHLEAEQKGALMEQIAHQAVVMQFIMEMAKNCNVDPRGCFRLFFQKAKAEEEGYFEAFKNELEAFKSRVRLYSQSPNFQPVTVQNHVPHSGVGSIGLLESLPQNPDYLQYSINTALCSLNSVVHKEDDEPKMMDTV</sequence>
<accession>A6H754</accession>
<evidence type="ECO:0000250" key="1"/>
<evidence type="ECO:0000250" key="2">
    <source>
        <dbReference type="UniProtKB" id="Q7L3B6"/>
    </source>
</evidence>
<evidence type="ECO:0000255" key="3"/>
<evidence type="ECO:0000256" key="4">
    <source>
        <dbReference type="SAM" id="MobiDB-lite"/>
    </source>
</evidence>
<evidence type="ECO:0000303" key="5">
    <source ref="2"/>
</evidence>
<evidence type="ECO:0000305" key="6"/>